<keyword id="KW-0067">ATP-binding</keyword>
<keyword id="KW-0436">Ligase</keyword>
<keyword id="KW-0547">Nucleotide-binding</keyword>
<keyword id="KW-0648">Protein biosynthesis</keyword>
<dbReference type="EC" id="6.3.5.-" evidence="1"/>
<dbReference type="EMBL" id="CP000076">
    <property type="protein sequence ID" value="AAY90182.1"/>
    <property type="molecule type" value="Genomic_DNA"/>
</dbReference>
<dbReference type="RefSeq" id="WP_011059250.1">
    <property type="nucleotide sequence ID" value="NC_004129.6"/>
</dbReference>
<dbReference type="SMR" id="Q4KIA7"/>
<dbReference type="STRING" id="220664.PFL_0895"/>
<dbReference type="GeneID" id="57473898"/>
<dbReference type="KEGG" id="pfl:PFL_0895"/>
<dbReference type="PATRIC" id="fig|220664.5.peg.917"/>
<dbReference type="eggNOG" id="COG0721">
    <property type="taxonomic scope" value="Bacteria"/>
</dbReference>
<dbReference type="HOGENOM" id="CLU_105899_2_2_6"/>
<dbReference type="Proteomes" id="UP000008540">
    <property type="component" value="Chromosome"/>
</dbReference>
<dbReference type="GO" id="GO:0050566">
    <property type="term" value="F:asparaginyl-tRNA synthase (glutamine-hydrolyzing) activity"/>
    <property type="evidence" value="ECO:0007669"/>
    <property type="project" value="RHEA"/>
</dbReference>
<dbReference type="GO" id="GO:0005524">
    <property type="term" value="F:ATP binding"/>
    <property type="evidence" value="ECO:0007669"/>
    <property type="project" value="UniProtKB-KW"/>
</dbReference>
<dbReference type="GO" id="GO:0050567">
    <property type="term" value="F:glutaminyl-tRNA synthase (glutamine-hydrolyzing) activity"/>
    <property type="evidence" value="ECO:0007669"/>
    <property type="project" value="UniProtKB-UniRule"/>
</dbReference>
<dbReference type="GO" id="GO:0070681">
    <property type="term" value="P:glutaminyl-tRNAGln biosynthesis via transamidation"/>
    <property type="evidence" value="ECO:0007669"/>
    <property type="project" value="TreeGrafter"/>
</dbReference>
<dbReference type="GO" id="GO:0006450">
    <property type="term" value="P:regulation of translational fidelity"/>
    <property type="evidence" value="ECO:0007669"/>
    <property type="project" value="InterPro"/>
</dbReference>
<dbReference type="GO" id="GO:0006412">
    <property type="term" value="P:translation"/>
    <property type="evidence" value="ECO:0007669"/>
    <property type="project" value="UniProtKB-UniRule"/>
</dbReference>
<dbReference type="Gene3D" id="1.10.20.60">
    <property type="entry name" value="Glu-tRNAGln amidotransferase C subunit, N-terminal domain"/>
    <property type="match status" value="1"/>
</dbReference>
<dbReference type="HAMAP" id="MF_00122">
    <property type="entry name" value="GatC"/>
    <property type="match status" value="1"/>
</dbReference>
<dbReference type="InterPro" id="IPR036113">
    <property type="entry name" value="Asp/Glu-ADT_sf_sub_c"/>
</dbReference>
<dbReference type="InterPro" id="IPR003837">
    <property type="entry name" value="GatC"/>
</dbReference>
<dbReference type="NCBIfam" id="TIGR00135">
    <property type="entry name" value="gatC"/>
    <property type="match status" value="1"/>
</dbReference>
<dbReference type="PANTHER" id="PTHR15004">
    <property type="entry name" value="GLUTAMYL-TRNA(GLN) AMIDOTRANSFERASE SUBUNIT C, MITOCHONDRIAL"/>
    <property type="match status" value="1"/>
</dbReference>
<dbReference type="PANTHER" id="PTHR15004:SF0">
    <property type="entry name" value="GLUTAMYL-TRNA(GLN) AMIDOTRANSFERASE SUBUNIT C, MITOCHONDRIAL"/>
    <property type="match status" value="1"/>
</dbReference>
<dbReference type="Pfam" id="PF02686">
    <property type="entry name" value="GatC"/>
    <property type="match status" value="1"/>
</dbReference>
<dbReference type="SUPFAM" id="SSF141000">
    <property type="entry name" value="Glu-tRNAGln amidotransferase C subunit"/>
    <property type="match status" value="1"/>
</dbReference>
<reference key="1">
    <citation type="journal article" date="2005" name="Nat. Biotechnol.">
        <title>Complete genome sequence of the plant commensal Pseudomonas fluorescens Pf-5.</title>
        <authorList>
            <person name="Paulsen I.T."/>
            <person name="Press C.M."/>
            <person name="Ravel J."/>
            <person name="Kobayashi D.Y."/>
            <person name="Myers G.S.A."/>
            <person name="Mavrodi D.V."/>
            <person name="DeBoy R.T."/>
            <person name="Seshadri R."/>
            <person name="Ren Q."/>
            <person name="Madupu R."/>
            <person name="Dodson R.J."/>
            <person name="Durkin A.S."/>
            <person name="Brinkac L.M."/>
            <person name="Daugherty S.C."/>
            <person name="Sullivan S.A."/>
            <person name="Rosovitz M.J."/>
            <person name="Gwinn M.L."/>
            <person name="Zhou L."/>
            <person name="Schneider D.J."/>
            <person name="Cartinhour S.W."/>
            <person name="Nelson W.C."/>
            <person name="Weidman J."/>
            <person name="Watkins K."/>
            <person name="Tran K."/>
            <person name="Khouri H."/>
            <person name="Pierson E.A."/>
            <person name="Pierson L.S. III"/>
            <person name="Thomashow L.S."/>
            <person name="Loper J.E."/>
        </authorList>
    </citation>
    <scope>NUCLEOTIDE SEQUENCE [LARGE SCALE GENOMIC DNA]</scope>
    <source>
        <strain>ATCC BAA-477 / NRRL B-23932 / Pf-5</strain>
    </source>
</reference>
<name>GATC_PSEF5</name>
<feature type="chain" id="PRO_1000016181" description="Aspartyl/glutamyl-tRNA(Asn/Gln) amidotransferase subunit C">
    <location>
        <begin position="1"/>
        <end position="95"/>
    </location>
</feature>
<accession>Q4KIA7</accession>
<organism>
    <name type="scientific">Pseudomonas fluorescens (strain ATCC BAA-477 / NRRL B-23932 / Pf-5)</name>
    <dbReference type="NCBI Taxonomy" id="220664"/>
    <lineage>
        <taxon>Bacteria</taxon>
        <taxon>Pseudomonadati</taxon>
        <taxon>Pseudomonadota</taxon>
        <taxon>Gammaproteobacteria</taxon>
        <taxon>Pseudomonadales</taxon>
        <taxon>Pseudomonadaceae</taxon>
        <taxon>Pseudomonas</taxon>
    </lineage>
</organism>
<proteinExistence type="inferred from homology"/>
<gene>
    <name evidence="1" type="primary">gatC</name>
    <name type="ordered locus">PFL_0895</name>
</gene>
<sequence>MALERSDVEKIAHLASIKLNEGDLPHITSALNSILGLVDEMQAVDTDGIEPLAHPLEASQRLRADVVTESNHREAYQSIAPAVESGLYLVPKVID</sequence>
<evidence type="ECO:0000255" key="1">
    <source>
        <dbReference type="HAMAP-Rule" id="MF_00122"/>
    </source>
</evidence>
<comment type="function">
    <text evidence="1">Allows the formation of correctly charged Asn-tRNA(Asn) or Gln-tRNA(Gln) through the transamidation of misacylated Asp-tRNA(Asn) or Glu-tRNA(Gln) in organisms which lack either or both of asparaginyl-tRNA or glutaminyl-tRNA synthetases. The reaction takes place in the presence of glutamine and ATP through an activated phospho-Asp-tRNA(Asn) or phospho-Glu-tRNA(Gln).</text>
</comment>
<comment type="catalytic activity">
    <reaction evidence="1">
        <text>L-glutamyl-tRNA(Gln) + L-glutamine + ATP + H2O = L-glutaminyl-tRNA(Gln) + L-glutamate + ADP + phosphate + H(+)</text>
        <dbReference type="Rhea" id="RHEA:17521"/>
        <dbReference type="Rhea" id="RHEA-COMP:9681"/>
        <dbReference type="Rhea" id="RHEA-COMP:9684"/>
        <dbReference type="ChEBI" id="CHEBI:15377"/>
        <dbReference type="ChEBI" id="CHEBI:15378"/>
        <dbReference type="ChEBI" id="CHEBI:29985"/>
        <dbReference type="ChEBI" id="CHEBI:30616"/>
        <dbReference type="ChEBI" id="CHEBI:43474"/>
        <dbReference type="ChEBI" id="CHEBI:58359"/>
        <dbReference type="ChEBI" id="CHEBI:78520"/>
        <dbReference type="ChEBI" id="CHEBI:78521"/>
        <dbReference type="ChEBI" id="CHEBI:456216"/>
    </reaction>
</comment>
<comment type="catalytic activity">
    <reaction evidence="1">
        <text>L-aspartyl-tRNA(Asn) + L-glutamine + ATP + H2O = L-asparaginyl-tRNA(Asn) + L-glutamate + ADP + phosphate + 2 H(+)</text>
        <dbReference type="Rhea" id="RHEA:14513"/>
        <dbReference type="Rhea" id="RHEA-COMP:9674"/>
        <dbReference type="Rhea" id="RHEA-COMP:9677"/>
        <dbReference type="ChEBI" id="CHEBI:15377"/>
        <dbReference type="ChEBI" id="CHEBI:15378"/>
        <dbReference type="ChEBI" id="CHEBI:29985"/>
        <dbReference type="ChEBI" id="CHEBI:30616"/>
        <dbReference type="ChEBI" id="CHEBI:43474"/>
        <dbReference type="ChEBI" id="CHEBI:58359"/>
        <dbReference type="ChEBI" id="CHEBI:78515"/>
        <dbReference type="ChEBI" id="CHEBI:78516"/>
        <dbReference type="ChEBI" id="CHEBI:456216"/>
    </reaction>
</comment>
<comment type="subunit">
    <text evidence="1">Heterotrimer of A, B and C subunits.</text>
</comment>
<comment type="similarity">
    <text evidence="1">Belongs to the GatC family.</text>
</comment>
<protein>
    <recommendedName>
        <fullName evidence="1">Aspartyl/glutamyl-tRNA(Asn/Gln) amidotransferase subunit C</fullName>
        <shortName evidence="1">Asp/Glu-ADT subunit C</shortName>
        <ecNumber evidence="1">6.3.5.-</ecNumber>
    </recommendedName>
</protein>